<sequence>MNVKDFDFYLPEELIAQHPLEKRDTSRLMVLDKETGEISHKNFYDIIDYLNEGDTLVLNNTRVMPARLIGEKEGTGGKIEFLLLKRVEKDRWECLAKPGKSARVGRRFTFGDGKLKAEVVEVKDNGNRIVEFYYEGIFEEVLDSLGEMPLPPYIHERLEDRERYQTVYSKENGSAAAPTAGLHFTEELLHKIKDRGINIAYVTLHVGLGTFRPVKVDTIEDHEMHSEYYHLSKEDAEVINATKKRGNKVISVGTTSTRTLETIADEDGNVKETNGWTNIFIYPGYKFKVVDRLITNFHLPESTLIMLVSTLAGKEHVMNAYEEAVKEKYRFFSFGDAMFIK</sequence>
<reference key="1">
    <citation type="submission" date="2008-04" db="EMBL/GenBank/DDBJ databases">
        <title>Complete sequence of Clostridium botulinum strain Eklund.</title>
        <authorList>
            <person name="Brinkac L.M."/>
            <person name="Brown J.L."/>
            <person name="Bruce D."/>
            <person name="Detter C."/>
            <person name="Munk C."/>
            <person name="Smith L.A."/>
            <person name="Smith T.J."/>
            <person name="Sutton G."/>
            <person name="Brettin T.S."/>
        </authorList>
    </citation>
    <scope>NUCLEOTIDE SEQUENCE [LARGE SCALE GENOMIC DNA]</scope>
    <source>
        <strain>Eklund 17B / Type B</strain>
    </source>
</reference>
<feature type="chain" id="PRO_1000094766" description="S-adenosylmethionine:tRNA ribosyltransferase-isomerase">
    <location>
        <begin position="1"/>
        <end position="341"/>
    </location>
</feature>
<dbReference type="EC" id="2.4.99.17" evidence="1"/>
<dbReference type="EMBL" id="CP001056">
    <property type="protein sequence ID" value="ACD23197.1"/>
    <property type="molecule type" value="Genomic_DNA"/>
</dbReference>
<dbReference type="SMR" id="B2TMZ3"/>
<dbReference type="KEGG" id="cbk:CLL_A1024"/>
<dbReference type="PATRIC" id="fig|935198.13.peg.973"/>
<dbReference type="HOGENOM" id="CLU_039110_1_0_9"/>
<dbReference type="UniPathway" id="UPA00392"/>
<dbReference type="Proteomes" id="UP000001195">
    <property type="component" value="Chromosome"/>
</dbReference>
<dbReference type="GO" id="GO:0005737">
    <property type="term" value="C:cytoplasm"/>
    <property type="evidence" value="ECO:0007669"/>
    <property type="project" value="UniProtKB-SubCell"/>
</dbReference>
<dbReference type="GO" id="GO:0051075">
    <property type="term" value="F:S-adenosylmethionine:tRNA ribosyltransferase-isomerase activity"/>
    <property type="evidence" value="ECO:0007669"/>
    <property type="project" value="UniProtKB-EC"/>
</dbReference>
<dbReference type="GO" id="GO:0008616">
    <property type="term" value="P:queuosine biosynthetic process"/>
    <property type="evidence" value="ECO:0007669"/>
    <property type="project" value="UniProtKB-UniRule"/>
</dbReference>
<dbReference type="GO" id="GO:0002099">
    <property type="term" value="P:tRNA wobble guanine modification"/>
    <property type="evidence" value="ECO:0007669"/>
    <property type="project" value="TreeGrafter"/>
</dbReference>
<dbReference type="FunFam" id="2.40.10.240:FF:000002">
    <property type="entry name" value="S-adenosylmethionine:tRNA ribosyltransferase-isomerase"/>
    <property type="match status" value="1"/>
</dbReference>
<dbReference type="FunFam" id="3.40.1780.10:FF:000001">
    <property type="entry name" value="S-adenosylmethionine:tRNA ribosyltransferase-isomerase"/>
    <property type="match status" value="1"/>
</dbReference>
<dbReference type="Gene3D" id="2.40.10.240">
    <property type="entry name" value="QueA-like"/>
    <property type="match status" value="1"/>
</dbReference>
<dbReference type="Gene3D" id="3.40.1780.10">
    <property type="entry name" value="QueA-like"/>
    <property type="match status" value="1"/>
</dbReference>
<dbReference type="HAMAP" id="MF_00113">
    <property type="entry name" value="QueA"/>
    <property type="match status" value="1"/>
</dbReference>
<dbReference type="InterPro" id="IPR003699">
    <property type="entry name" value="QueA"/>
</dbReference>
<dbReference type="InterPro" id="IPR042118">
    <property type="entry name" value="QueA_dom1"/>
</dbReference>
<dbReference type="InterPro" id="IPR042119">
    <property type="entry name" value="QueA_dom2"/>
</dbReference>
<dbReference type="InterPro" id="IPR036100">
    <property type="entry name" value="QueA_sf"/>
</dbReference>
<dbReference type="NCBIfam" id="NF001140">
    <property type="entry name" value="PRK00147.1"/>
    <property type="match status" value="1"/>
</dbReference>
<dbReference type="NCBIfam" id="TIGR00113">
    <property type="entry name" value="queA"/>
    <property type="match status" value="1"/>
</dbReference>
<dbReference type="PANTHER" id="PTHR30307">
    <property type="entry name" value="S-ADENOSYLMETHIONINE:TRNA RIBOSYLTRANSFERASE-ISOMERASE"/>
    <property type="match status" value="1"/>
</dbReference>
<dbReference type="PANTHER" id="PTHR30307:SF0">
    <property type="entry name" value="S-ADENOSYLMETHIONINE:TRNA RIBOSYLTRANSFERASE-ISOMERASE"/>
    <property type="match status" value="1"/>
</dbReference>
<dbReference type="Pfam" id="PF02547">
    <property type="entry name" value="Queuosine_synth"/>
    <property type="match status" value="1"/>
</dbReference>
<dbReference type="SUPFAM" id="SSF111337">
    <property type="entry name" value="QueA-like"/>
    <property type="match status" value="1"/>
</dbReference>
<protein>
    <recommendedName>
        <fullName evidence="1">S-adenosylmethionine:tRNA ribosyltransferase-isomerase</fullName>
        <ecNumber evidence="1">2.4.99.17</ecNumber>
    </recommendedName>
    <alternativeName>
        <fullName evidence="1">Queuosine biosynthesis protein QueA</fullName>
    </alternativeName>
</protein>
<comment type="function">
    <text evidence="1">Transfers and isomerizes the ribose moiety from AdoMet to the 7-aminomethyl group of 7-deazaguanine (preQ1-tRNA) to give epoxyqueuosine (oQ-tRNA).</text>
</comment>
<comment type="catalytic activity">
    <reaction evidence="1">
        <text>7-aminomethyl-7-carbaguanosine(34) in tRNA + S-adenosyl-L-methionine = epoxyqueuosine(34) in tRNA + adenine + L-methionine + 2 H(+)</text>
        <dbReference type="Rhea" id="RHEA:32155"/>
        <dbReference type="Rhea" id="RHEA-COMP:10342"/>
        <dbReference type="Rhea" id="RHEA-COMP:18582"/>
        <dbReference type="ChEBI" id="CHEBI:15378"/>
        <dbReference type="ChEBI" id="CHEBI:16708"/>
        <dbReference type="ChEBI" id="CHEBI:57844"/>
        <dbReference type="ChEBI" id="CHEBI:59789"/>
        <dbReference type="ChEBI" id="CHEBI:82833"/>
        <dbReference type="ChEBI" id="CHEBI:194443"/>
        <dbReference type="EC" id="2.4.99.17"/>
    </reaction>
</comment>
<comment type="pathway">
    <text evidence="1">tRNA modification; tRNA-queuosine biosynthesis.</text>
</comment>
<comment type="subunit">
    <text evidence="1">Monomer.</text>
</comment>
<comment type="subcellular location">
    <subcellularLocation>
        <location evidence="1">Cytoplasm</location>
    </subcellularLocation>
</comment>
<comment type="similarity">
    <text evidence="1">Belongs to the QueA family.</text>
</comment>
<accession>B2TMZ3</accession>
<evidence type="ECO:0000255" key="1">
    <source>
        <dbReference type="HAMAP-Rule" id="MF_00113"/>
    </source>
</evidence>
<proteinExistence type="inferred from homology"/>
<organism>
    <name type="scientific">Clostridium botulinum (strain Eklund 17B / Type B)</name>
    <dbReference type="NCBI Taxonomy" id="935198"/>
    <lineage>
        <taxon>Bacteria</taxon>
        <taxon>Bacillati</taxon>
        <taxon>Bacillota</taxon>
        <taxon>Clostridia</taxon>
        <taxon>Eubacteriales</taxon>
        <taxon>Clostridiaceae</taxon>
        <taxon>Clostridium</taxon>
    </lineage>
</organism>
<gene>
    <name evidence="1" type="primary">queA</name>
    <name type="ordered locus">CLL_A1024</name>
</gene>
<name>QUEA_CLOBB</name>
<keyword id="KW-0963">Cytoplasm</keyword>
<keyword id="KW-0671">Queuosine biosynthesis</keyword>
<keyword id="KW-0949">S-adenosyl-L-methionine</keyword>
<keyword id="KW-0808">Transferase</keyword>